<accession>Q7NDU3</accession>
<dbReference type="EMBL" id="BA000045">
    <property type="protein sequence ID" value="BAC92080.1"/>
    <property type="molecule type" value="Genomic_DNA"/>
</dbReference>
<dbReference type="RefSeq" id="NP_927085.1">
    <property type="nucleotide sequence ID" value="NC_005125.1"/>
</dbReference>
<dbReference type="SMR" id="Q7NDU3"/>
<dbReference type="FunCoup" id="Q7NDU3">
    <property type="interactions" value="90"/>
</dbReference>
<dbReference type="STRING" id="251221.gene:10761657"/>
<dbReference type="EnsemblBacteria" id="BAC92080">
    <property type="protein sequence ID" value="BAC92080"/>
    <property type="gene ID" value="BAC92080"/>
</dbReference>
<dbReference type="KEGG" id="gvi:glr4139"/>
<dbReference type="PATRIC" id="fig|251221.4.peg.4172"/>
<dbReference type="eggNOG" id="COG2038">
    <property type="taxonomic scope" value="Bacteria"/>
</dbReference>
<dbReference type="HOGENOM" id="CLU_053134_1_0_3"/>
<dbReference type="InParanoid" id="Q7NDU3"/>
<dbReference type="OrthoDB" id="418257at2"/>
<dbReference type="PhylomeDB" id="Q7NDU3"/>
<dbReference type="Proteomes" id="UP000000557">
    <property type="component" value="Chromosome"/>
</dbReference>
<dbReference type="GO" id="GO:0008939">
    <property type="term" value="F:nicotinate-nucleotide-dimethylbenzimidazole phosphoribosyltransferase activity"/>
    <property type="evidence" value="ECO:0007669"/>
    <property type="project" value="InterPro"/>
</dbReference>
<dbReference type="CDD" id="cd02439">
    <property type="entry name" value="DMB-PRT_CobT"/>
    <property type="match status" value="1"/>
</dbReference>
<dbReference type="Gene3D" id="3.40.50.10210">
    <property type="match status" value="1"/>
</dbReference>
<dbReference type="HAMAP" id="MF_01086">
    <property type="entry name" value="UPF0284"/>
    <property type="match status" value="1"/>
</dbReference>
<dbReference type="InterPro" id="IPR003200">
    <property type="entry name" value="Nict_dMeBzImd_PRibTrfase"/>
</dbReference>
<dbReference type="InterPro" id="IPR002805">
    <property type="entry name" value="Nict_dMeBzImd_PRibTrfase_arc"/>
</dbReference>
<dbReference type="InterPro" id="IPR036087">
    <property type="entry name" value="Nict_dMeBzImd_PRibTrfase_sf"/>
</dbReference>
<dbReference type="NCBIfam" id="TIGR00303">
    <property type="entry name" value="nicotinate mononucleotide-dependent phosphoribosyltransferase CobT"/>
    <property type="match status" value="1"/>
</dbReference>
<dbReference type="NCBIfam" id="NF003373">
    <property type="entry name" value="PRK04447.1-6"/>
    <property type="match status" value="1"/>
</dbReference>
<dbReference type="PANTHER" id="PTHR38811">
    <property type="match status" value="1"/>
</dbReference>
<dbReference type="PANTHER" id="PTHR38811:SF1">
    <property type="entry name" value="UPF0284 PROTEIN SLL1500"/>
    <property type="match status" value="1"/>
</dbReference>
<dbReference type="Pfam" id="PF02277">
    <property type="entry name" value="DBI_PRT"/>
    <property type="match status" value="1"/>
</dbReference>
<dbReference type="SUPFAM" id="SSF52733">
    <property type="entry name" value="Nicotinate mononucleotide:5,6-dimethylbenzimidazole phosphoribosyltransferase (CobT)"/>
    <property type="match status" value="1"/>
</dbReference>
<gene>
    <name type="ordered locus">glr4139</name>
</gene>
<feature type="chain" id="PRO_0000151040" description="UPF0284 protein glr4139">
    <location>
        <begin position="1"/>
        <end position="376"/>
    </location>
</feature>
<sequence>MGAACPRRPIGARILPMVIYCFDPERGRRWTERLTGIRPQFACVLGFTETALIPGISAAGLTPEARRFTALGDGEVLLAGRSARLPSAPEGYPSPVVISRAVVELLGLPVRVFDAGLPETCKDAVHLGGSPARCLSTGRALAPDTVAHLFSQGLAWGERLADEGGYLAIGECVAGGTTTALAVLRALGHAADGLVSSSHPRCNHTQKGALVDLALQKADLPIDASALAILAALGDPAQPAIAGMAIAASHRVPVLLAGGTQMLAVAAVAERLAAEAGLGWRPEQIAVGTTRWVAADPTADAALLAARIGVVPLLAAALDFSHSRHPALQAYERGYVKEGVGAGGLAIAAELAGIDSERLLAAIDDWLDRWNLPTPV</sequence>
<comment type="similarity">
    <text evidence="1">Belongs to the UPF0284 family.</text>
</comment>
<protein>
    <recommendedName>
        <fullName evidence="1">UPF0284 protein glr4139</fullName>
    </recommendedName>
</protein>
<reference key="1">
    <citation type="journal article" date="2003" name="DNA Res.">
        <title>Complete genome structure of Gloeobacter violaceus PCC 7421, a cyanobacterium that lacks thylakoids.</title>
        <authorList>
            <person name="Nakamura Y."/>
            <person name="Kaneko T."/>
            <person name="Sato S."/>
            <person name="Mimuro M."/>
            <person name="Miyashita H."/>
            <person name="Tsuchiya T."/>
            <person name="Sasamoto S."/>
            <person name="Watanabe A."/>
            <person name="Kawashima K."/>
            <person name="Kishida Y."/>
            <person name="Kiyokawa C."/>
            <person name="Kohara M."/>
            <person name="Matsumoto M."/>
            <person name="Matsuno A."/>
            <person name="Nakazaki N."/>
            <person name="Shimpo S."/>
            <person name="Takeuchi C."/>
            <person name="Yamada M."/>
            <person name="Tabata S."/>
        </authorList>
    </citation>
    <scope>NUCLEOTIDE SEQUENCE [LARGE SCALE GENOMIC DNA]</scope>
    <source>
        <strain>ATCC 29082 / PCC 7421</strain>
    </source>
</reference>
<name>Y4139_GLOVI</name>
<proteinExistence type="inferred from homology"/>
<evidence type="ECO:0000255" key="1">
    <source>
        <dbReference type="HAMAP-Rule" id="MF_01086"/>
    </source>
</evidence>
<keyword id="KW-1185">Reference proteome</keyword>
<organism>
    <name type="scientific">Gloeobacter violaceus (strain ATCC 29082 / PCC 7421)</name>
    <dbReference type="NCBI Taxonomy" id="251221"/>
    <lineage>
        <taxon>Bacteria</taxon>
        <taxon>Bacillati</taxon>
        <taxon>Cyanobacteriota</taxon>
        <taxon>Cyanophyceae</taxon>
        <taxon>Gloeobacterales</taxon>
        <taxon>Gloeobacteraceae</taxon>
        <taxon>Gloeobacter</taxon>
    </lineage>
</organism>